<evidence type="ECO:0000255" key="1"/>
<evidence type="ECO:0000269" key="2">
    <source>
    </source>
</evidence>
<evidence type="ECO:0000269" key="3">
    <source>
    </source>
</evidence>
<evidence type="ECO:0000269" key="4">
    <source>
    </source>
</evidence>
<evidence type="ECO:0000269" key="5">
    <source>
    </source>
</evidence>
<evidence type="ECO:0000303" key="6">
    <source>
    </source>
</evidence>
<evidence type="ECO:0000303" key="7">
    <source>
    </source>
</evidence>
<evidence type="ECO:0000305" key="8"/>
<sequence length="1026" mass="117491">MVCRPVFPCRRRFCPRPFLVGLVVAICLFYQTLTLRGSRKLTAAAPGAVPHTSTETQASRCKKGFSQDKQCFLLSGNAQETRKVKESMETHFGSHGRRAILYRPPFYSKTELQLHQHILTQHGYTVVIAEERLNAGLGPGLLEQGDLGSWDLLICLSSKKAEGTPCISKEVMCQLGLHQKANRLPEIQQPLCRKEGLCQIVRRFPELQLPVSPSVCLDQGMQLKPSTSSHLLKTVKPRVWKPGDWSREQLNETTVLAPHETIFRAEDLSVILKAYVLVTSLTPLRAFIHSTGTVWNPPKKKRFTVKLQTFFETFLRASSPQQAFDIMKEAIGKLLLAAEVFSETSTLGPKTFHRCRFCFQLLTFDIGYGSFMYPVVLQVHEHLNFQDYDNMDFEDQNTEEFLLNDTFNFLFPNESSLSIFSEIFQRLYRSDVFKGENYQKELNQCLSLEEINSIMTFIKELGSLGQFQLLFPSTTPGIQSLMHEFYDVANPVGNPGSVLTQYWSLLNVFEQFQFMNKKTQPHPLEWNSFTEDKNIEKPQVPFDAIENKKAAVPQIKNENKEIHCSDDENTPCHIKQIFTHPHLELNPDFHPKIKDYYCEVPFDVVTVTIGVETPKCLCKVHLYEQAGPSFASYPLGLGMNKISIFVVDESPAHGETLITYKLTIYREDRPSLPLFEAFTACGFVQDCGLLIHPEETCGLQPISSDYIEAILQSELKRCPSGDMKGQWIVPCLSCSDNRTCDWREITWQPHNCQYGVLTKPQLQQCLGGRKILFIGDSTNRGIMYYLIERLNETLQEWQKVHGTKFYHNVNGGKTLISYSYYPQFWISPSLRPTFENALEHLLQRSRPLENTGQTVLVVGGVQWLNSNHLQIIHKVLKRENLLNILVIIKTLGIGFHLPVDGVHFLTQSEVQNLWKENLIILDTAKKHGYEVVDTFTITMGRYKEFLQGKCGCHFHEVVKSKLSKEYNFIKMKRSRNHIMGRYFSNQSKLQQGTVTNFRSPYHVRGPINQVCSEILLSRMCANKRTM</sequence>
<accession>A4D0V7</accession>
<accession>A8K1R3</accession>
<accession>Q6UXT1</accession>
<accession>Q86T76</accession>
<accession>Q86T84</accession>
<accession>Q8N2T5</accession>
<accession>Q96NC9</accession>
<proteinExistence type="evidence at protein level"/>
<name>CPED1_HUMAN</name>
<comment type="alternative products">
    <event type="alternative splicing"/>
    <isoform>
        <id>A4D0V7-1</id>
        <name>1</name>
        <sequence type="displayed"/>
    </isoform>
    <isoform>
        <id>A4D0V7-2</id>
        <name>2</name>
        <sequence type="described" ref="VSP_031140 VSP_031141"/>
    </isoform>
</comment>
<comment type="similarity">
    <text evidence="8">Belongs to the PC-esterase family.</text>
</comment>
<comment type="sequence caution" evidence="8">
    <conflict type="erroneous initiation">
        <sequence resource="EMBL-CDS" id="AAH30538"/>
    </conflict>
    <text>Truncated N-terminus.</text>
</comment>
<gene>
    <name type="primary">CPED1</name>
    <name type="synonym">C7orf58</name>
    <name type="ORF">UNQ9432/PRO34713</name>
</gene>
<protein>
    <recommendedName>
        <fullName>Cadherin-like and PC-esterase domain-containing protein 1</fullName>
    </recommendedName>
</protein>
<organism>
    <name type="scientific">Homo sapiens</name>
    <name type="common">Human</name>
    <dbReference type="NCBI Taxonomy" id="9606"/>
    <lineage>
        <taxon>Eukaryota</taxon>
        <taxon>Metazoa</taxon>
        <taxon>Chordata</taxon>
        <taxon>Craniata</taxon>
        <taxon>Vertebrata</taxon>
        <taxon>Euteleostomi</taxon>
        <taxon>Mammalia</taxon>
        <taxon>Eutheria</taxon>
        <taxon>Euarchontoglires</taxon>
        <taxon>Primates</taxon>
        <taxon>Haplorrhini</taxon>
        <taxon>Catarrhini</taxon>
        <taxon>Hominidae</taxon>
        <taxon>Homo</taxon>
    </lineage>
</organism>
<reference key="1">
    <citation type="journal article" date="2003" name="Genome Res.">
        <title>The secreted protein discovery initiative (SPDI), a large-scale effort to identify novel human secreted and transmembrane proteins: a bioinformatics assessment.</title>
        <authorList>
            <person name="Clark H.F."/>
            <person name="Gurney A.L."/>
            <person name="Abaya E."/>
            <person name="Baker K."/>
            <person name="Baldwin D.T."/>
            <person name="Brush J."/>
            <person name="Chen J."/>
            <person name="Chow B."/>
            <person name="Chui C."/>
            <person name="Crowley C."/>
            <person name="Currell B."/>
            <person name="Deuel B."/>
            <person name="Dowd P."/>
            <person name="Eaton D."/>
            <person name="Foster J.S."/>
            <person name="Grimaldi C."/>
            <person name="Gu Q."/>
            <person name="Hass P.E."/>
            <person name="Heldens S."/>
            <person name="Huang A."/>
            <person name="Kim H.S."/>
            <person name="Klimowski L."/>
            <person name="Jin Y."/>
            <person name="Johnson S."/>
            <person name="Lee J."/>
            <person name="Lewis L."/>
            <person name="Liao D."/>
            <person name="Mark M.R."/>
            <person name="Robbie E."/>
            <person name="Sanchez C."/>
            <person name="Schoenfeld J."/>
            <person name="Seshagiri S."/>
            <person name="Simmons L."/>
            <person name="Singh J."/>
            <person name="Smith V."/>
            <person name="Stinson J."/>
            <person name="Vagts A."/>
            <person name="Vandlen R.L."/>
            <person name="Watanabe C."/>
            <person name="Wieand D."/>
            <person name="Woods K."/>
            <person name="Xie M.-H."/>
            <person name="Yansura D.G."/>
            <person name="Yi S."/>
            <person name="Yu G."/>
            <person name="Yuan J."/>
            <person name="Zhang M."/>
            <person name="Zhang Z."/>
            <person name="Goddard A.D."/>
            <person name="Wood W.I."/>
            <person name="Godowski P.J."/>
            <person name="Gray A.M."/>
        </authorList>
    </citation>
    <scope>NUCLEOTIDE SEQUENCE [LARGE SCALE MRNA] (ISOFORM 2)</scope>
    <scope>VARIANT GLY-551</scope>
</reference>
<reference key="2">
    <citation type="journal article" date="2004" name="Nat. Genet.">
        <title>Complete sequencing and characterization of 21,243 full-length human cDNAs.</title>
        <authorList>
            <person name="Ota T."/>
            <person name="Suzuki Y."/>
            <person name="Nishikawa T."/>
            <person name="Otsuki T."/>
            <person name="Sugiyama T."/>
            <person name="Irie R."/>
            <person name="Wakamatsu A."/>
            <person name="Hayashi K."/>
            <person name="Sato H."/>
            <person name="Nagai K."/>
            <person name="Kimura K."/>
            <person name="Makita H."/>
            <person name="Sekine M."/>
            <person name="Obayashi M."/>
            <person name="Nishi T."/>
            <person name="Shibahara T."/>
            <person name="Tanaka T."/>
            <person name="Ishii S."/>
            <person name="Yamamoto J."/>
            <person name="Saito K."/>
            <person name="Kawai Y."/>
            <person name="Isono Y."/>
            <person name="Nakamura Y."/>
            <person name="Nagahari K."/>
            <person name="Murakami K."/>
            <person name="Yasuda T."/>
            <person name="Iwayanagi T."/>
            <person name="Wagatsuma M."/>
            <person name="Shiratori A."/>
            <person name="Sudo H."/>
            <person name="Hosoiri T."/>
            <person name="Kaku Y."/>
            <person name="Kodaira H."/>
            <person name="Kondo H."/>
            <person name="Sugawara M."/>
            <person name="Takahashi M."/>
            <person name="Kanda K."/>
            <person name="Yokoi T."/>
            <person name="Furuya T."/>
            <person name="Kikkawa E."/>
            <person name="Omura Y."/>
            <person name="Abe K."/>
            <person name="Kamihara K."/>
            <person name="Katsuta N."/>
            <person name="Sato K."/>
            <person name="Tanikawa M."/>
            <person name="Yamazaki M."/>
            <person name="Ninomiya K."/>
            <person name="Ishibashi T."/>
            <person name="Yamashita H."/>
            <person name="Murakawa K."/>
            <person name="Fujimori K."/>
            <person name="Tanai H."/>
            <person name="Kimata M."/>
            <person name="Watanabe M."/>
            <person name="Hiraoka S."/>
            <person name="Chiba Y."/>
            <person name="Ishida S."/>
            <person name="Ono Y."/>
            <person name="Takiguchi S."/>
            <person name="Watanabe S."/>
            <person name="Yosida M."/>
            <person name="Hotuta T."/>
            <person name="Kusano J."/>
            <person name="Kanehori K."/>
            <person name="Takahashi-Fujii A."/>
            <person name="Hara H."/>
            <person name="Tanase T.-O."/>
            <person name="Nomura Y."/>
            <person name="Togiya S."/>
            <person name="Komai F."/>
            <person name="Hara R."/>
            <person name="Takeuchi K."/>
            <person name="Arita M."/>
            <person name="Imose N."/>
            <person name="Musashino K."/>
            <person name="Yuuki H."/>
            <person name="Oshima A."/>
            <person name="Sasaki N."/>
            <person name="Aotsuka S."/>
            <person name="Yoshikawa Y."/>
            <person name="Matsunawa H."/>
            <person name="Ichihara T."/>
            <person name="Shiohata N."/>
            <person name="Sano S."/>
            <person name="Moriya S."/>
            <person name="Momiyama H."/>
            <person name="Satoh N."/>
            <person name="Takami S."/>
            <person name="Terashima Y."/>
            <person name="Suzuki O."/>
            <person name="Nakagawa S."/>
            <person name="Senoh A."/>
            <person name="Mizoguchi H."/>
            <person name="Goto Y."/>
            <person name="Shimizu F."/>
            <person name="Wakebe H."/>
            <person name="Hishigaki H."/>
            <person name="Watanabe T."/>
            <person name="Sugiyama A."/>
            <person name="Takemoto M."/>
            <person name="Kawakami B."/>
            <person name="Yamazaki M."/>
            <person name="Watanabe K."/>
            <person name="Kumagai A."/>
            <person name="Itakura S."/>
            <person name="Fukuzumi Y."/>
            <person name="Fujimori Y."/>
            <person name="Komiyama M."/>
            <person name="Tashiro H."/>
            <person name="Tanigami A."/>
            <person name="Fujiwara T."/>
            <person name="Ono T."/>
            <person name="Yamada K."/>
            <person name="Fujii Y."/>
            <person name="Ozaki K."/>
            <person name="Hirao M."/>
            <person name="Ohmori Y."/>
            <person name="Kawabata A."/>
            <person name="Hikiji T."/>
            <person name="Kobatake N."/>
            <person name="Inagaki H."/>
            <person name="Ikema Y."/>
            <person name="Okamoto S."/>
            <person name="Okitani R."/>
            <person name="Kawakami T."/>
            <person name="Noguchi S."/>
            <person name="Itoh T."/>
            <person name="Shigeta K."/>
            <person name="Senba T."/>
            <person name="Matsumura K."/>
            <person name="Nakajima Y."/>
            <person name="Mizuno T."/>
            <person name="Morinaga M."/>
            <person name="Sasaki M."/>
            <person name="Togashi T."/>
            <person name="Oyama M."/>
            <person name="Hata H."/>
            <person name="Watanabe M."/>
            <person name="Komatsu T."/>
            <person name="Mizushima-Sugano J."/>
            <person name="Satoh T."/>
            <person name="Shirai Y."/>
            <person name="Takahashi Y."/>
            <person name="Nakagawa K."/>
            <person name="Okumura K."/>
            <person name="Nagase T."/>
            <person name="Nomura N."/>
            <person name="Kikuchi H."/>
            <person name="Masuho Y."/>
            <person name="Yamashita R."/>
            <person name="Nakai K."/>
            <person name="Yada T."/>
            <person name="Nakamura Y."/>
            <person name="Ohara O."/>
            <person name="Isogai T."/>
            <person name="Sugano S."/>
        </authorList>
    </citation>
    <scope>NUCLEOTIDE SEQUENCE [LARGE SCALE MRNA] (ISOFORM 1)</scope>
    <scope>VARIANTS GLY-551 AND GLY-708</scope>
    <source>
        <tissue>Hippocampus</tissue>
    </source>
</reference>
<reference key="3">
    <citation type="journal article" date="2007" name="BMC Genomics">
        <title>The full-ORF clone resource of the German cDNA consortium.</title>
        <authorList>
            <person name="Bechtel S."/>
            <person name="Rosenfelder H."/>
            <person name="Duda A."/>
            <person name="Schmidt C.P."/>
            <person name="Ernst U."/>
            <person name="Wellenreuther R."/>
            <person name="Mehrle A."/>
            <person name="Schuster C."/>
            <person name="Bahr A."/>
            <person name="Bloecker H."/>
            <person name="Heubner D."/>
            <person name="Hoerlein A."/>
            <person name="Michel G."/>
            <person name="Wedler H."/>
            <person name="Koehrer K."/>
            <person name="Ottenwaelder B."/>
            <person name="Poustka A."/>
            <person name="Wiemann S."/>
            <person name="Schupp I."/>
        </authorList>
    </citation>
    <scope>NUCLEOTIDE SEQUENCE [LARGE SCALE MRNA] (ISOFORM 1)</scope>
    <scope>VARIANT GLY-708</scope>
    <source>
        <tissue>Spinal cord</tissue>
    </source>
</reference>
<reference key="4">
    <citation type="journal article" date="2003" name="Science">
        <title>Human chromosome 7: DNA sequence and biology.</title>
        <authorList>
            <person name="Scherer S.W."/>
            <person name="Cheung J."/>
            <person name="MacDonald J.R."/>
            <person name="Osborne L.R."/>
            <person name="Nakabayashi K."/>
            <person name="Herbrick J.-A."/>
            <person name="Carson A.R."/>
            <person name="Parker-Katiraee L."/>
            <person name="Skaug J."/>
            <person name="Khaja R."/>
            <person name="Zhang J."/>
            <person name="Hudek A.K."/>
            <person name="Li M."/>
            <person name="Haddad M."/>
            <person name="Duggan G.E."/>
            <person name="Fernandez B.A."/>
            <person name="Kanematsu E."/>
            <person name="Gentles S."/>
            <person name="Christopoulos C.C."/>
            <person name="Choufani S."/>
            <person name="Kwasnicka D."/>
            <person name="Zheng X.H."/>
            <person name="Lai Z."/>
            <person name="Nusskern D.R."/>
            <person name="Zhang Q."/>
            <person name="Gu Z."/>
            <person name="Lu F."/>
            <person name="Zeesman S."/>
            <person name="Nowaczyk M.J."/>
            <person name="Teshima I."/>
            <person name="Chitayat D."/>
            <person name="Shuman C."/>
            <person name="Weksberg R."/>
            <person name="Zackai E.H."/>
            <person name="Grebe T.A."/>
            <person name="Cox S.R."/>
            <person name="Kirkpatrick S.J."/>
            <person name="Rahman N."/>
            <person name="Friedman J.M."/>
            <person name="Heng H.H.Q."/>
            <person name="Pelicci P.G."/>
            <person name="Lo-Coco F."/>
            <person name="Belloni E."/>
            <person name="Shaffer L.G."/>
            <person name="Pober B."/>
            <person name="Morton C.C."/>
            <person name="Gusella J.F."/>
            <person name="Bruns G.A.P."/>
            <person name="Korf B.R."/>
            <person name="Quade B.J."/>
            <person name="Ligon A.H."/>
            <person name="Ferguson H."/>
            <person name="Higgins A.W."/>
            <person name="Leach N.T."/>
            <person name="Herrick S.R."/>
            <person name="Lemyre E."/>
            <person name="Farra C.G."/>
            <person name="Kim H.-G."/>
            <person name="Summers A.M."/>
            <person name="Gripp K.W."/>
            <person name="Roberts W."/>
            <person name="Szatmari P."/>
            <person name="Winsor E.J.T."/>
            <person name="Grzeschik K.-H."/>
            <person name="Teebi A."/>
            <person name="Minassian B.A."/>
            <person name="Kere J."/>
            <person name="Armengol L."/>
            <person name="Pujana M.A."/>
            <person name="Estivill X."/>
            <person name="Wilson M.D."/>
            <person name="Koop B.F."/>
            <person name="Tosi S."/>
            <person name="Moore G.E."/>
            <person name="Boright A.P."/>
            <person name="Zlotorynski E."/>
            <person name="Kerem B."/>
            <person name="Kroisel P.M."/>
            <person name="Petek E."/>
            <person name="Oscier D.G."/>
            <person name="Mould S.J."/>
            <person name="Doehner H."/>
            <person name="Doehner K."/>
            <person name="Rommens J.M."/>
            <person name="Vincent J.B."/>
            <person name="Venter J.C."/>
            <person name="Li P.W."/>
            <person name="Mural R.J."/>
            <person name="Adams M.D."/>
            <person name="Tsui L.-C."/>
        </authorList>
    </citation>
    <scope>NUCLEOTIDE SEQUENCE [LARGE SCALE GENOMIC DNA]</scope>
</reference>
<reference key="5">
    <citation type="journal article" date="2004" name="Genome Res.">
        <title>The status, quality, and expansion of the NIH full-length cDNA project: the Mammalian Gene Collection (MGC).</title>
        <authorList>
            <consortium name="The MGC Project Team"/>
        </authorList>
    </citation>
    <scope>NUCLEOTIDE SEQUENCE [LARGE SCALE MRNA] OF 181-802 (ISOFORM 2)</scope>
    <scope>VARIANT GLY-551</scope>
    <source>
        <tissue>Skin</tissue>
    </source>
</reference>
<dbReference type="EMBL" id="AY358220">
    <property type="protein sequence ID" value="AAQ88587.1"/>
    <property type="molecule type" value="mRNA"/>
</dbReference>
<dbReference type="EMBL" id="AK055624">
    <property type="protein sequence ID" value="BAB70974.1"/>
    <property type="molecule type" value="mRNA"/>
</dbReference>
<dbReference type="EMBL" id="AK289978">
    <property type="protein sequence ID" value="BAF82667.1"/>
    <property type="molecule type" value="mRNA"/>
</dbReference>
<dbReference type="EMBL" id="AL832619">
    <property type="protein sequence ID" value="CAD89961.1"/>
    <property type="molecule type" value="mRNA"/>
</dbReference>
<dbReference type="EMBL" id="AL832638">
    <property type="protein sequence ID" value="CAD89953.1"/>
    <property type="molecule type" value="mRNA"/>
</dbReference>
<dbReference type="EMBL" id="CH236947">
    <property type="protein sequence ID" value="EAL24348.1"/>
    <property type="molecule type" value="Genomic_DNA"/>
</dbReference>
<dbReference type="EMBL" id="BC030538">
    <property type="protein sequence ID" value="AAH30538.1"/>
    <property type="status" value="ALT_INIT"/>
    <property type="molecule type" value="mRNA"/>
</dbReference>
<dbReference type="CCDS" id="CCDS34739.1">
    <molecule id="A4D0V7-1"/>
</dbReference>
<dbReference type="CCDS" id="CCDS47690.1">
    <molecule id="A4D0V7-2"/>
</dbReference>
<dbReference type="RefSeq" id="NP_001099003.1">
    <molecule id="A4D0V7-2"/>
    <property type="nucleotide sequence ID" value="NM_001105533.1"/>
</dbReference>
<dbReference type="RefSeq" id="NP_079189.4">
    <molecule id="A4D0V7-1"/>
    <property type="nucleotide sequence ID" value="NM_024913.4"/>
</dbReference>
<dbReference type="RefSeq" id="XP_047276812.1">
    <molecule id="A4D0V7-2"/>
    <property type="nucleotide sequence ID" value="XM_047420856.1"/>
</dbReference>
<dbReference type="BioGRID" id="123041">
    <property type="interactions" value="2"/>
</dbReference>
<dbReference type="FunCoup" id="A4D0V7">
    <property type="interactions" value="522"/>
</dbReference>
<dbReference type="IntAct" id="A4D0V7">
    <property type="interactions" value="1"/>
</dbReference>
<dbReference type="STRING" id="9606.ENSP00000309772"/>
<dbReference type="GlyCosmos" id="A4D0V7">
    <property type="glycosylation" value="6 sites, No reported glycans"/>
</dbReference>
<dbReference type="GlyGen" id="A4D0V7">
    <property type="glycosylation" value="6 sites"/>
</dbReference>
<dbReference type="iPTMnet" id="A4D0V7"/>
<dbReference type="PhosphoSitePlus" id="A4D0V7"/>
<dbReference type="BioMuta" id="CPED1"/>
<dbReference type="jPOST" id="A4D0V7"/>
<dbReference type="MassIVE" id="A4D0V7"/>
<dbReference type="PaxDb" id="9606-ENSP00000309772"/>
<dbReference type="PeptideAtlas" id="A4D0V7"/>
<dbReference type="ProteomicsDB" id="598">
    <molecule id="A4D0V7-1"/>
</dbReference>
<dbReference type="ProteomicsDB" id="599">
    <molecule id="A4D0V7-2"/>
</dbReference>
<dbReference type="Antibodypedia" id="2305">
    <property type="antibodies" value="48 antibodies from 14 providers"/>
</dbReference>
<dbReference type="DNASU" id="79974"/>
<dbReference type="Ensembl" id="ENST00000310396.10">
    <molecule id="A4D0V7-1"/>
    <property type="protein sequence ID" value="ENSP00000309772.5"/>
    <property type="gene ID" value="ENSG00000106034.18"/>
</dbReference>
<dbReference type="Ensembl" id="ENST00000450913.6">
    <molecule id="A4D0V7-2"/>
    <property type="protein sequence ID" value="ENSP00000406122.2"/>
    <property type="gene ID" value="ENSG00000106034.18"/>
</dbReference>
<dbReference type="GeneID" id="79974"/>
<dbReference type="KEGG" id="hsa:79974"/>
<dbReference type="MANE-Select" id="ENST00000310396.10">
    <property type="protein sequence ID" value="ENSP00000309772.5"/>
    <property type="RefSeq nucleotide sequence ID" value="NM_024913.5"/>
    <property type="RefSeq protein sequence ID" value="NP_079189.4"/>
</dbReference>
<dbReference type="UCSC" id="uc003vjq.5">
    <molecule id="A4D0V7-1"/>
    <property type="organism name" value="human"/>
</dbReference>
<dbReference type="AGR" id="HGNC:26159"/>
<dbReference type="CTD" id="79974"/>
<dbReference type="DisGeNET" id="79974"/>
<dbReference type="GeneCards" id="CPED1"/>
<dbReference type="HGNC" id="HGNC:26159">
    <property type="gene designation" value="CPED1"/>
</dbReference>
<dbReference type="HPA" id="ENSG00000106034">
    <property type="expression patterns" value="Low tissue specificity"/>
</dbReference>
<dbReference type="MIM" id="620637">
    <property type="type" value="gene"/>
</dbReference>
<dbReference type="neXtProt" id="NX_A4D0V7"/>
<dbReference type="OpenTargets" id="ENSG00000106034"/>
<dbReference type="PharmGKB" id="PA162380636"/>
<dbReference type="VEuPathDB" id="HostDB:ENSG00000106034"/>
<dbReference type="eggNOG" id="ENOG502QQAY">
    <property type="taxonomic scope" value="Eukaryota"/>
</dbReference>
<dbReference type="GeneTree" id="ENSGT00390000015216"/>
<dbReference type="HOGENOM" id="CLU_011328_0_0_1"/>
<dbReference type="InParanoid" id="A4D0V7"/>
<dbReference type="OMA" id="HRYTVVI"/>
<dbReference type="OrthoDB" id="1932925at2759"/>
<dbReference type="PAN-GO" id="A4D0V7">
    <property type="GO annotations" value="0 GO annotations based on evolutionary models"/>
</dbReference>
<dbReference type="PhylomeDB" id="A4D0V7"/>
<dbReference type="TreeFam" id="TF332741"/>
<dbReference type="PathwayCommons" id="A4D0V7"/>
<dbReference type="SignaLink" id="A4D0V7"/>
<dbReference type="BioGRID-ORCS" id="79974">
    <property type="hits" value="14 hits in 1154 CRISPR screens"/>
</dbReference>
<dbReference type="ChiTaRS" id="CPED1">
    <property type="organism name" value="human"/>
</dbReference>
<dbReference type="GeneWiki" id="FLJ21986"/>
<dbReference type="GenomeRNAi" id="79974"/>
<dbReference type="Pharos" id="A4D0V7">
    <property type="development level" value="Tdark"/>
</dbReference>
<dbReference type="PRO" id="PR:A4D0V7"/>
<dbReference type="Proteomes" id="UP000005640">
    <property type="component" value="Chromosome 7"/>
</dbReference>
<dbReference type="RNAct" id="A4D0V7">
    <property type="molecule type" value="protein"/>
</dbReference>
<dbReference type="Bgee" id="ENSG00000106034">
    <property type="expression patterns" value="Expressed in cauda epididymis and 176 other cell types or tissues"/>
</dbReference>
<dbReference type="ExpressionAtlas" id="A4D0V7">
    <property type="expression patterns" value="baseline and differential"/>
</dbReference>
<dbReference type="GO" id="GO:0005783">
    <property type="term" value="C:endoplasmic reticulum"/>
    <property type="evidence" value="ECO:0000314"/>
    <property type="project" value="LIFEdb"/>
</dbReference>
<dbReference type="InterPro" id="IPR025883">
    <property type="entry name" value="Cadherin-like_b_sandwich"/>
</dbReference>
<dbReference type="InterPro" id="IPR057106">
    <property type="entry name" value="NXPE4_C"/>
</dbReference>
<dbReference type="PANTHER" id="PTHR14776">
    <property type="entry name" value="CADHERIN-LIKE AND PC-ESTERASE DOMAIN-CONTAINING PROTEIN 1"/>
    <property type="match status" value="1"/>
</dbReference>
<dbReference type="PANTHER" id="PTHR14776:SF1">
    <property type="entry name" value="CADHERIN-LIKE AND PC-ESTERASE DOMAIN-CONTAINING PROTEIN 1"/>
    <property type="match status" value="1"/>
</dbReference>
<dbReference type="Pfam" id="PF12733">
    <property type="entry name" value="Cadherin-like"/>
    <property type="match status" value="1"/>
</dbReference>
<dbReference type="Pfam" id="PF24536">
    <property type="entry name" value="NXPE4_C"/>
    <property type="match status" value="1"/>
</dbReference>
<keyword id="KW-0025">Alternative splicing</keyword>
<keyword id="KW-0325">Glycoprotein</keyword>
<keyword id="KW-1267">Proteomics identification</keyword>
<keyword id="KW-1185">Reference proteome</keyword>
<keyword id="KW-0732">Signal</keyword>
<feature type="signal peptide" evidence="1">
    <location>
        <begin position="1"/>
        <end position="34"/>
    </location>
</feature>
<feature type="chain" id="PRO_0000317732" description="Cadherin-like and PC-esterase domain-containing protein 1">
    <location>
        <begin position="35"/>
        <end position="1026"/>
    </location>
</feature>
<feature type="glycosylation site" description="N-linked (GlcNAc...) asparagine" evidence="1">
    <location>
        <position position="251"/>
    </location>
</feature>
<feature type="glycosylation site" description="N-linked (GlcNAc...) asparagine" evidence="1">
    <location>
        <position position="404"/>
    </location>
</feature>
<feature type="glycosylation site" description="N-linked (GlcNAc...) asparagine" evidence="1">
    <location>
        <position position="413"/>
    </location>
</feature>
<feature type="glycosylation site" description="N-linked (GlcNAc...) asparagine" evidence="1">
    <location>
        <position position="737"/>
    </location>
</feature>
<feature type="glycosylation site" description="N-linked (GlcNAc...) asparagine" evidence="1">
    <location>
        <position position="791"/>
    </location>
</feature>
<feature type="glycosylation site" description="N-linked (GlcNAc...) asparagine" evidence="1">
    <location>
        <position position="985"/>
    </location>
</feature>
<feature type="splice variant" id="VSP_031140" description="In isoform 2." evidence="6 7">
    <original>ILFIGDSTNRGIM</original>
    <variation>LGVDVQRVPRSRN</variation>
    <location>
        <begin position="771"/>
        <end position="783"/>
    </location>
</feature>
<feature type="splice variant" id="VSP_031141" description="In isoform 2." evidence="6 7">
    <location>
        <begin position="784"/>
        <end position="1026"/>
    </location>
</feature>
<feature type="sequence variant" id="VAR_038664" description="In dbSNP:rs17143165.">
    <original>I</original>
    <variation>T</variation>
    <location>
        <position position="326"/>
    </location>
</feature>
<feature type="sequence variant" id="VAR_038665" description="In dbSNP:rs41281692." evidence="2 3 4">
    <original>A</original>
    <variation>G</variation>
    <location>
        <position position="551"/>
    </location>
</feature>
<feature type="sequence variant" id="VAR_038666" description="In dbSNP:rs35793694." evidence="3 5">
    <original>E</original>
    <variation>G</variation>
    <location>
        <position position="708"/>
    </location>
</feature>
<feature type="sequence variant" id="VAR_038667" description="In dbSNP:rs798911.">
    <original>K</original>
    <variation>T</variation>
    <location>
        <position position="949"/>
    </location>
</feature>
<feature type="sequence conflict" description="In Ref. 3; CAD89961." evidence="8" ref="3">
    <original>C</original>
    <variation>R</variation>
    <location>
        <position position="173"/>
    </location>
</feature>
<feature type="sequence conflict" description="In Ref. 2; BAF82667." evidence="8" ref="2">
    <original>E</original>
    <variation>G</variation>
    <location>
        <position position="186"/>
    </location>
</feature>
<feature type="sequence conflict" description="In Ref. 3; CAD89961." evidence="8" ref="3">
    <original>I</original>
    <variation>T</variation>
    <location>
        <position position="262"/>
    </location>
</feature>
<feature type="sequence conflict" description="In Ref. 3; CAD89961." evidence="8" ref="3">
    <original>K</original>
    <variation>R</variation>
    <location>
        <position position="641"/>
    </location>
</feature>
<feature type="sequence conflict" description="In Ref. 3; CAD89961." evidence="8" ref="3">
    <original>Q</original>
    <variation>R</variation>
    <location>
        <position position="795"/>
    </location>
</feature>